<evidence type="ECO:0000250" key="1"/>
<evidence type="ECO:0000256" key="2">
    <source>
        <dbReference type="SAM" id="MobiDB-lite"/>
    </source>
</evidence>
<evidence type="ECO:0000305" key="3"/>
<feature type="chain" id="PRO_0000289656" description="Protein BTG3">
    <location>
        <begin position="1"/>
        <end position="252"/>
    </location>
</feature>
<feature type="region of interest" description="Disordered" evidence="2">
    <location>
        <begin position="138"/>
        <end position="165"/>
    </location>
</feature>
<name>BTG3_PIG</name>
<comment type="function">
    <text evidence="1">Overexpression impairs serum-induced cell cycle progression from the G0/G1 to S phase.</text>
</comment>
<comment type="similarity">
    <text evidence="3">Belongs to the BTG family.</text>
</comment>
<dbReference type="EMBL" id="EF486868">
    <property type="protein sequence ID" value="ABP01569.1"/>
    <property type="molecule type" value="mRNA"/>
</dbReference>
<dbReference type="RefSeq" id="NP_001090986.1">
    <property type="nucleotide sequence ID" value="NM_001097517.1"/>
</dbReference>
<dbReference type="RefSeq" id="XP_020923831.1">
    <property type="nucleotide sequence ID" value="XM_021068172.1"/>
</dbReference>
<dbReference type="SMR" id="A4UTQ2"/>
<dbReference type="FunCoup" id="A4UTQ2">
    <property type="interactions" value="213"/>
</dbReference>
<dbReference type="STRING" id="9823.ENSSSCP00000069605"/>
<dbReference type="GlyGen" id="A4UTQ2">
    <property type="glycosylation" value="1 site"/>
</dbReference>
<dbReference type="PaxDb" id="9823-ENSSSCP00000012797"/>
<dbReference type="Ensembl" id="ENSSSCT00000077168.1">
    <property type="protein sequence ID" value="ENSSSCP00000069605.1"/>
    <property type="gene ID" value="ENSSSCG00000012014.4"/>
</dbReference>
<dbReference type="Ensembl" id="ENSSSCT00015021949.1">
    <property type="protein sequence ID" value="ENSSSCP00015008600.1"/>
    <property type="gene ID" value="ENSSSCG00015016572.1"/>
</dbReference>
<dbReference type="Ensembl" id="ENSSSCT00025007089.1">
    <property type="protein sequence ID" value="ENSSSCP00025002906.1"/>
    <property type="gene ID" value="ENSSSCG00025005270.1"/>
</dbReference>
<dbReference type="Ensembl" id="ENSSSCT00030044676.1">
    <property type="protein sequence ID" value="ENSSSCP00030020081.1"/>
    <property type="gene ID" value="ENSSSCG00030032294.1"/>
</dbReference>
<dbReference type="Ensembl" id="ENSSSCT00035089489.1">
    <property type="protein sequence ID" value="ENSSSCP00035037407.1"/>
    <property type="gene ID" value="ENSSSCG00035066423.1"/>
</dbReference>
<dbReference type="Ensembl" id="ENSSSCT00040088684.1">
    <property type="protein sequence ID" value="ENSSSCP00040038983.1"/>
    <property type="gene ID" value="ENSSSCG00040064866.1"/>
</dbReference>
<dbReference type="Ensembl" id="ENSSSCT00045055455.1">
    <property type="protein sequence ID" value="ENSSSCP00045038668.1"/>
    <property type="gene ID" value="ENSSSCG00045032456.1"/>
</dbReference>
<dbReference type="Ensembl" id="ENSSSCT00050053542.1">
    <property type="protein sequence ID" value="ENSSSCP00050022504.1"/>
    <property type="gene ID" value="ENSSSCG00050039666.1"/>
</dbReference>
<dbReference type="Ensembl" id="ENSSSCT00055018734.1">
    <property type="protein sequence ID" value="ENSSSCP00055014765.1"/>
    <property type="gene ID" value="ENSSSCG00055009573.1"/>
</dbReference>
<dbReference type="Ensembl" id="ENSSSCT00060105141.1">
    <property type="protein sequence ID" value="ENSSSCP00060046147.1"/>
    <property type="gene ID" value="ENSSSCG00060076568.1"/>
</dbReference>
<dbReference type="Ensembl" id="ENSSSCT00065034115.1">
    <property type="protein sequence ID" value="ENSSSCP00065014122.1"/>
    <property type="gene ID" value="ENSSSCG00065025497.1"/>
</dbReference>
<dbReference type="Ensembl" id="ENSSSCT00070033318.1">
    <property type="protein sequence ID" value="ENSSSCP00070027829.1"/>
    <property type="gene ID" value="ENSSSCG00070016918.1"/>
</dbReference>
<dbReference type="Ensembl" id="ENSSSCT00090040641">
    <property type="protein sequence ID" value="ENSSSCP00090025256"/>
    <property type="gene ID" value="ENSSSCG00090022924"/>
</dbReference>
<dbReference type="Ensembl" id="ENSSSCT00105033764">
    <property type="protein sequence ID" value="ENSSSCP00105023564"/>
    <property type="gene ID" value="ENSSSCG00105017549"/>
</dbReference>
<dbReference type="Ensembl" id="ENSSSCT00110020881">
    <property type="protein sequence ID" value="ENSSSCP00110014101"/>
    <property type="gene ID" value="ENSSSCG00110010879"/>
</dbReference>
<dbReference type="Ensembl" id="ENSSSCT00115030773">
    <property type="protein sequence ID" value="ENSSSCP00115029258"/>
    <property type="gene ID" value="ENSSSCG00115017418"/>
</dbReference>
<dbReference type="Ensembl" id="ENSSSCT00130052032">
    <property type="protein sequence ID" value="ENSSSCP00130036970"/>
    <property type="gene ID" value="ENSSSCG00130026843"/>
</dbReference>
<dbReference type="GeneID" id="100048957"/>
<dbReference type="KEGG" id="ssc:100048957"/>
<dbReference type="CTD" id="10950"/>
<dbReference type="VGNC" id="VGNC:103908">
    <property type="gene designation" value="BTG3"/>
</dbReference>
<dbReference type="eggNOG" id="KOG4006">
    <property type="taxonomic scope" value="Eukaryota"/>
</dbReference>
<dbReference type="GeneTree" id="ENSGT00950000182952"/>
<dbReference type="HOGENOM" id="CLU_079660_3_0_1"/>
<dbReference type="InParanoid" id="A4UTQ2"/>
<dbReference type="OMA" id="HYGYRPR"/>
<dbReference type="OrthoDB" id="19928at2759"/>
<dbReference type="TreeFam" id="TF105272"/>
<dbReference type="Proteomes" id="UP000008227">
    <property type="component" value="Chromosome 13"/>
</dbReference>
<dbReference type="Proteomes" id="UP000314985">
    <property type="component" value="Chromosome 13"/>
</dbReference>
<dbReference type="Proteomes" id="UP000694570">
    <property type="component" value="Unplaced"/>
</dbReference>
<dbReference type="Proteomes" id="UP000694571">
    <property type="component" value="Unplaced"/>
</dbReference>
<dbReference type="Proteomes" id="UP000694720">
    <property type="component" value="Unplaced"/>
</dbReference>
<dbReference type="Proteomes" id="UP000694722">
    <property type="component" value="Unplaced"/>
</dbReference>
<dbReference type="Proteomes" id="UP000694723">
    <property type="component" value="Unplaced"/>
</dbReference>
<dbReference type="Proteomes" id="UP000694724">
    <property type="component" value="Unplaced"/>
</dbReference>
<dbReference type="Proteomes" id="UP000694725">
    <property type="component" value="Unplaced"/>
</dbReference>
<dbReference type="Proteomes" id="UP000694726">
    <property type="component" value="Unplaced"/>
</dbReference>
<dbReference type="Proteomes" id="UP000694727">
    <property type="component" value="Unplaced"/>
</dbReference>
<dbReference type="Proteomes" id="UP000694728">
    <property type="component" value="Unplaced"/>
</dbReference>
<dbReference type="Bgee" id="ENSSSCG00000012014">
    <property type="expression patterns" value="Expressed in stomach and 46 other cell types or tissues"/>
</dbReference>
<dbReference type="ExpressionAtlas" id="A4UTQ2">
    <property type="expression patterns" value="baseline and differential"/>
</dbReference>
<dbReference type="GO" id="GO:0005737">
    <property type="term" value="C:cytoplasm"/>
    <property type="evidence" value="ECO:0000318"/>
    <property type="project" value="GO_Central"/>
</dbReference>
<dbReference type="GO" id="GO:0005634">
    <property type="term" value="C:nucleus"/>
    <property type="evidence" value="ECO:0000318"/>
    <property type="project" value="GO_Central"/>
</dbReference>
<dbReference type="GO" id="GO:0045930">
    <property type="term" value="P:negative regulation of mitotic cell cycle"/>
    <property type="evidence" value="ECO:0007669"/>
    <property type="project" value="Ensembl"/>
</dbReference>
<dbReference type="FunFam" id="3.90.640.90:FF:000002">
    <property type="entry name" value="BTG anti-proliferation factor 4"/>
    <property type="match status" value="1"/>
</dbReference>
<dbReference type="Gene3D" id="3.90.640.90">
    <property type="entry name" value="Anti-proliferative protein, N-terminal domain"/>
    <property type="match status" value="1"/>
</dbReference>
<dbReference type="InterPro" id="IPR002087">
    <property type="entry name" value="Anti_prolifrtn"/>
</dbReference>
<dbReference type="InterPro" id="IPR033332">
    <property type="entry name" value="BTG"/>
</dbReference>
<dbReference type="InterPro" id="IPR036054">
    <property type="entry name" value="BTG-like_sf"/>
</dbReference>
<dbReference type="PANTHER" id="PTHR22978">
    <property type="entry name" value="B-CELL TRANSLOCATION GENE"/>
    <property type="match status" value="1"/>
</dbReference>
<dbReference type="PANTHER" id="PTHR22978:SF6">
    <property type="entry name" value="PROTEIN BTG3"/>
    <property type="match status" value="1"/>
</dbReference>
<dbReference type="Pfam" id="PF07742">
    <property type="entry name" value="BTG"/>
    <property type="match status" value="1"/>
</dbReference>
<dbReference type="PRINTS" id="PR00310">
    <property type="entry name" value="ANTIPRLFBTG1"/>
</dbReference>
<dbReference type="SMART" id="SM00099">
    <property type="entry name" value="btg1"/>
    <property type="match status" value="1"/>
</dbReference>
<dbReference type="SUPFAM" id="SSF160696">
    <property type="entry name" value="BTG domain-like"/>
    <property type="match status" value="1"/>
</dbReference>
<dbReference type="PROSITE" id="PS00960">
    <property type="entry name" value="BTG_1"/>
    <property type="match status" value="1"/>
</dbReference>
<dbReference type="PROSITE" id="PS01203">
    <property type="entry name" value="BTG_2"/>
    <property type="match status" value="1"/>
</dbReference>
<organism>
    <name type="scientific">Sus scrofa</name>
    <name type="common">Pig</name>
    <dbReference type="NCBI Taxonomy" id="9823"/>
    <lineage>
        <taxon>Eukaryota</taxon>
        <taxon>Metazoa</taxon>
        <taxon>Chordata</taxon>
        <taxon>Craniata</taxon>
        <taxon>Vertebrata</taxon>
        <taxon>Euteleostomi</taxon>
        <taxon>Mammalia</taxon>
        <taxon>Eutheria</taxon>
        <taxon>Laurasiatheria</taxon>
        <taxon>Artiodactyla</taxon>
        <taxon>Suina</taxon>
        <taxon>Suidae</taxon>
        <taxon>Sus</taxon>
    </lineage>
</organism>
<gene>
    <name type="primary">BTG3</name>
</gene>
<keyword id="KW-1185">Reference proteome</keyword>
<protein>
    <recommendedName>
        <fullName>Protein BTG3</fullName>
    </recommendedName>
    <alternativeName>
        <fullName>BTG family member 3</fullName>
    </alternativeName>
</protein>
<reference key="1">
    <citation type="submission" date="2007-03" db="EMBL/GenBank/DDBJ databases">
        <title>Molecular characterization of the BTG2 and BTG3 genes in fetal muscle development of lean and fatty pig breeds.</title>
        <authorList>
            <person name="Zhao S."/>
            <person name="Feng Z."/>
            <person name="Li K."/>
        </authorList>
    </citation>
    <scope>NUCLEOTIDE SEQUENCE [MRNA]</scope>
    <source>
        <tissue>Muscle</tissue>
    </source>
</reference>
<proteinExistence type="evidence at transcript level"/>
<sequence length="252" mass="29154">MKNEIAAVVFFFTRLVRKHDKLKKEAVERFAEKLTLILQEKYKNHWYPEKPSKGQAYRCIRVNKFQRVDPDVLKACENSCILYSDLGLPKELTLWVDPCEVCCRYGEKNNAFIVASFENEEENKDEISKKVTRALDKVTSDYHSGSSSSDEETSKEVEVKPNSVTATPSPVYQISELIFPPLPMWHPLPRKKPGMYRGNGHQNHYPPPVPFGYPNQGRKNKPYRPIPVTWVPPPGMHCDRNHWINPHMLAPH</sequence>
<accession>A4UTQ2</accession>